<evidence type="ECO:0000250" key="1"/>
<evidence type="ECO:0000255" key="2">
    <source>
        <dbReference type="PROSITE-ProRule" id="PRU00169"/>
    </source>
</evidence>
<evidence type="ECO:0000255" key="3">
    <source>
        <dbReference type="PROSITE-ProRule" id="PRU00411"/>
    </source>
</evidence>
<evidence type="ECO:0000305" key="4"/>
<evidence type="ECO:0007829" key="5">
    <source>
        <dbReference type="PDB" id="5F64"/>
    </source>
</evidence>
<name>EVGA_SHIFL</name>
<comment type="function">
    <text evidence="1">Member of the two-component regulatory system EvgS/EvgA. Regulates the expression of emrKY operon and yfdX. Also seems to control expression of at least one other multidrug efflux operon (By similarity).</text>
</comment>
<comment type="subunit">
    <text evidence="1">Homodimer.</text>
</comment>
<comment type="subcellular location">
    <subcellularLocation>
        <location evidence="1">Cytoplasm</location>
    </subcellularLocation>
</comment>
<comment type="PTM">
    <text evidence="1">Phosphorylated by EvgS.</text>
</comment>
<reference key="1">
    <citation type="journal article" date="2002" name="Nucleic Acids Res.">
        <title>Genome sequence of Shigella flexneri 2a: insights into pathogenicity through comparison with genomes of Escherichia coli K12 and O157.</title>
        <authorList>
            <person name="Jin Q."/>
            <person name="Yuan Z."/>
            <person name="Xu J."/>
            <person name="Wang Y."/>
            <person name="Shen Y."/>
            <person name="Lu W."/>
            <person name="Wang J."/>
            <person name="Liu H."/>
            <person name="Yang J."/>
            <person name="Yang F."/>
            <person name="Zhang X."/>
            <person name="Zhang J."/>
            <person name="Yang G."/>
            <person name="Wu H."/>
            <person name="Qu D."/>
            <person name="Dong J."/>
            <person name="Sun L."/>
            <person name="Xue Y."/>
            <person name="Zhao A."/>
            <person name="Gao Y."/>
            <person name="Zhu J."/>
            <person name="Kan B."/>
            <person name="Ding K."/>
            <person name="Chen S."/>
            <person name="Cheng H."/>
            <person name="Yao Z."/>
            <person name="He B."/>
            <person name="Chen R."/>
            <person name="Ma D."/>
            <person name="Qiang B."/>
            <person name="Wen Y."/>
            <person name="Hou Y."/>
            <person name="Yu J."/>
        </authorList>
    </citation>
    <scope>NUCLEOTIDE SEQUENCE [LARGE SCALE GENOMIC DNA]</scope>
    <source>
        <strain>301 / Serotype 2a</strain>
    </source>
</reference>
<reference key="2">
    <citation type="journal article" date="2003" name="Infect. Immun.">
        <title>Complete genome sequence and comparative genomics of Shigella flexneri serotype 2a strain 2457T.</title>
        <authorList>
            <person name="Wei J."/>
            <person name="Goldberg M.B."/>
            <person name="Burland V."/>
            <person name="Venkatesan M.M."/>
            <person name="Deng W."/>
            <person name="Fournier G."/>
            <person name="Mayhew G.F."/>
            <person name="Plunkett G. III"/>
            <person name="Rose D.J."/>
            <person name="Darling A."/>
            <person name="Mau B."/>
            <person name="Perna N.T."/>
            <person name="Payne S.M."/>
            <person name="Runyen-Janecky L.J."/>
            <person name="Zhou S."/>
            <person name="Schwartz D.C."/>
            <person name="Blattner F.R."/>
        </authorList>
    </citation>
    <scope>NUCLEOTIDE SEQUENCE [LARGE SCALE GENOMIC DNA]</scope>
    <source>
        <strain>ATCC 700930 / 2457T / Serotype 2a</strain>
    </source>
</reference>
<dbReference type="EMBL" id="AE005674">
    <property type="protein sequence ID" value="AAN43947.1"/>
    <property type="molecule type" value="Genomic_DNA"/>
</dbReference>
<dbReference type="EMBL" id="AE014073">
    <property type="protein sequence ID" value="AAP17757.1"/>
    <property type="molecule type" value="Genomic_DNA"/>
</dbReference>
<dbReference type="RefSeq" id="NP_708240.1">
    <property type="nucleotide sequence ID" value="NC_004337.2"/>
</dbReference>
<dbReference type="RefSeq" id="WP_000991370.1">
    <property type="nucleotide sequence ID" value="NZ_WPGW01000144.1"/>
</dbReference>
<dbReference type="PDB" id="5F64">
    <property type="method" value="X-ray"/>
    <property type="resolution" value="2.71 A"/>
    <property type="chains" value="A/B/C/D=1-204"/>
</dbReference>
<dbReference type="PDBsum" id="5F64"/>
<dbReference type="SMR" id="P0ACZ7"/>
<dbReference type="STRING" id="198214.SF2436"/>
<dbReference type="CARD" id="ARO:3000832">
    <property type="molecule name" value="evgA"/>
    <property type="mechanism identifier" value="ARO:0010000"/>
    <property type="mechanism name" value="antibiotic efflux"/>
</dbReference>
<dbReference type="PaxDb" id="198214-SF2436"/>
<dbReference type="GeneID" id="1025897"/>
<dbReference type="GeneID" id="75202562"/>
<dbReference type="KEGG" id="sfl:SF2436"/>
<dbReference type="KEGG" id="sfx:S2573"/>
<dbReference type="PATRIC" id="fig|198214.7.peg.2910"/>
<dbReference type="HOGENOM" id="CLU_000445_90_1_6"/>
<dbReference type="EvolutionaryTrace" id="P0ACZ7"/>
<dbReference type="Proteomes" id="UP000001006">
    <property type="component" value="Chromosome"/>
</dbReference>
<dbReference type="Proteomes" id="UP000002673">
    <property type="component" value="Chromosome"/>
</dbReference>
<dbReference type="GO" id="GO:0005737">
    <property type="term" value="C:cytoplasm"/>
    <property type="evidence" value="ECO:0007669"/>
    <property type="project" value="UniProtKB-SubCell"/>
</dbReference>
<dbReference type="GO" id="GO:0003677">
    <property type="term" value="F:DNA binding"/>
    <property type="evidence" value="ECO:0007669"/>
    <property type="project" value="UniProtKB-KW"/>
</dbReference>
<dbReference type="GO" id="GO:0000160">
    <property type="term" value="P:phosphorelay signal transduction system"/>
    <property type="evidence" value="ECO:0007669"/>
    <property type="project" value="UniProtKB-KW"/>
</dbReference>
<dbReference type="GO" id="GO:0006355">
    <property type="term" value="P:regulation of DNA-templated transcription"/>
    <property type="evidence" value="ECO:0007669"/>
    <property type="project" value="InterPro"/>
</dbReference>
<dbReference type="CDD" id="cd06170">
    <property type="entry name" value="LuxR_C_like"/>
    <property type="match status" value="1"/>
</dbReference>
<dbReference type="CDD" id="cd17535">
    <property type="entry name" value="REC_NarL-like"/>
    <property type="match status" value="1"/>
</dbReference>
<dbReference type="Gene3D" id="3.40.50.2300">
    <property type="match status" value="1"/>
</dbReference>
<dbReference type="Gene3D" id="1.10.10.10">
    <property type="entry name" value="Winged helix-like DNA-binding domain superfamily/Winged helix DNA-binding domain"/>
    <property type="match status" value="1"/>
</dbReference>
<dbReference type="InterPro" id="IPR011006">
    <property type="entry name" value="CheY-like_superfamily"/>
</dbReference>
<dbReference type="InterPro" id="IPR051015">
    <property type="entry name" value="RcsB_transcriptional_reg"/>
</dbReference>
<dbReference type="InterPro" id="IPR016032">
    <property type="entry name" value="Sig_transdc_resp-reg_C-effctor"/>
</dbReference>
<dbReference type="InterPro" id="IPR001789">
    <property type="entry name" value="Sig_transdc_resp-reg_receiver"/>
</dbReference>
<dbReference type="InterPro" id="IPR000792">
    <property type="entry name" value="Tscrpt_reg_LuxR_C"/>
</dbReference>
<dbReference type="InterPro" id="IPR036388">
    <property type="entry name" value="WH-like_DNA-bd_sf"/>
</dbReference>
<dbReference type="NCBIfam" id="NF007419">
    <property type="entry name" value="PRK09958.1"/>
    <property type="match status" value="1"/>
</dbReference>
<dbReference type="PANTHER" id="PTHR45566">
    <property type="entry name" value="HTH-TYPE TRANSCRIPTIONAL REGULATOR YHJB-RELATED"/>
    <property type="match status" value="1"/>
</dbReference>
<dbReference type="PANTHER" id="PTHR45566:SF2">
    <property type="entry name" value="NARL SUBFAMILY"/>
    <property type="match status" value="1"/>
</dbReference>
<dbReference type="Pfam" id="PF00196">
    <property type="entry name" value="GerE"/>
    <property type="match status" value="1"/>
</dbReference>
<dbReference type="Pfam" id="PF00072">
    <property type="entry name" value="Response_reg"/>
    <property type="match status" value="1"/>
</dbReference>
<dbReference type="PRINTS" id="PR00038">
    <property type="entry name" value="HTHLUXR"/>
</dbReference>
<dbReference type="SMART" id="SM00421">
    <property type="entry name" value="HTH_LUXR"/>
    <property type="match status" value="1"/>
</dbReference>
<dbReference type="SMART" id="SM00448">
    <property type="entry name" value="REC"/>
    <property type="match status" value="1"/>
</dbReference>
<dbReference type="SUPFAM" id="SSF46894">
    <property type="entry name" value="C-terminal effector domain of the bipartite response regulators"/>
    <property type="match status" value="1"/>
</dbReference>
<dbReference type="SUPFAM" id="SSF52172">
    <property type="entry name" value="CheY-like"/>
    <property type="match status" value="1"/>
</dbReference>
<dbReference type="PROSITE" id="PS00622">
    <property type="entry name" value="HTH_LUXR_1"/>
    <property type="match status" value="1"/>
</dbReference>
<dbReference type="PROSITE" id="PS50043">
    <property type="entry name" value="HTH_LUXR_2"/>
    <property type="match status" value="1"/>
</dbReference>
<dbReference type="PROSITE" id="PS50110">
    <property type="entry name" value="RESPONSE_REGULATORY"/>
    <property type="match status" value="1"/>
</dbReference>
<organism>
    <name type="scientific">Shigella flexneri</name>
    <dbReference type="NCBI Taxonomy" id="623"/>
    <lineage>
        <taxon>Bacteria</taxon>
        <taxon>Pseudomonadati</taxon>
        <taxon>Pseudomonadota</taxon>
        <taxon>Gammaproteobacteria</taxon>
        <taxon>Enterobacterales</taxon>
        <taxon>Enterobacteriaceae</taxon>
        <taxon>Shigella</taxon>
    </lineage>
</organism>
<proteinExistence type="evidence at protein level"/>
<sequence>MNAIIIDDHPLAIAAIRNLLIKNDIEILAELTEGGSAVQRVETLKPDIVIIDVDIPGVNGIQVLETLRKRQYSGIIIIVSAKNDHFYGKHCADAGANGFVSKKEGMNNIIAAIEAAKNGYCYFPFSLNRFVGSLTSDQQKLDSLSKQEISVMRYILDGKDNNDIAEKMFISNKTVSTYKSRLMEKLECKSLMDLYTFAQRNKIG</sequence>
<protein>
    <recommendedName>
        <fullName evidence="4">DNA-binding transcriptional activator EvgA</fullName>
    </recommendedName>
</protein>
<gene>
    <name type="primary">evgA</name>
    <name type="ordered locus">SF2436</name>
    <name type="ordered locus">S2573</name>
</gene>
<accession>P0ACZ7</accession>
<accession>P30854</accession>
<keyword id="KW-0002">3D-structure</keyword>
<keyword id="KW-0010">Activator</keyword>
<keyword id="KW-0963">Cytoplasm</keyword>
<keyword id="KW-0238">DNA-binding</keyword>
<keyword id="KW-0597">Phosphoprotein</keyword>
<keyword id="KW-1185">Reference proteome</keyword>
<keyword id="KW-0804">Transcription</keyword>
<keyword id="KW-0805">Transcription regulation</keyword>
<keyword id="KW-0902">Two-component regulatory system</keyword>
<feature type="chain" id="PRO_0000081038" description="DNA-binding transcriptional activator EvgA">
    <location>
        <begin position="1"/>
        <end position="204"/>
    </location>
</feature>
<feature type="domain" description="Response regulatory" evidence="2">
    <location>
        <begin position="2"/>
        <end position="117"/>
    </location>
</feature>
<feature type="domain" description="HTH luxR-type" evidence="3">
    <location>
        <begin position="137"/>
        <end position="202"/>
    </location>
</feature>
<feature type="DNA-binding region" description="H-T-H motif" evidence="3">
    <location>
        <begin position="161"/>
        <end position="180"/>
    </location>
</feature>
<feature type="modified residue" description="4-aspartylphosphate" evidence="2">
    <location>
        <position position="52"/>
    </location>
</feature>
<feature type="strand" evidence="5">
    <location>
        <begin position="1"/>
        <end position="6"/>
    </location>
</feature>
<feature type="helix" evidence="5">
    <location>
        <begin position="10"/>
        <end position="22"/>
    </location>
</feature>
<feature type="strand" evidence="5">
    <location>
        <begin position="25"/>
        <end position="32"/>
    </location>
</feature>
<feature type="helix" evidence="5">
    <location>
        <begin position="37"/>
        <end position="44"/>
    </location>
</feature>
<feature type="strand" evidence="5">
    <location>
        <begin position="47"/>
        <end position="52"/>
    </location>
</feature>
<feature type="strand" evidence="5">
    <location>
        <begin position="56"/>
        <end position="58"/>
    </location>
</feature>
<feature type="helix" evidence="5">
    <location>
        <begin position="60"/>
        <end position="69"/>
    </location>
</feature>
<feature type="strand" evidence="5">
    <location>
        <begin position="74"/>
        <end position="82"/>
    </location>
</feature>
<feature type="helix" evidence="5">
    <location>
        <begin position="87"/>
        <end position="93"/>
    </location>
</feature>
<feature type="strand" evidence="5">
    <location>
        <begin position="97"/>
        <end position="101"/>
    </location>
</feature>
<feature type="helix" evidence="5">
    <location>
        <begin position="102"/>
        <end position="104"/>
    </location>
</feature>
<feature type="helix" evidence="5">
    <location>
        <begin position="107"/>
        <end position="117"/>
    </location>
</feature>
<feature type="strand" evidence="5">
    <location>
        <begin position="120"/>
        <end position="124"/>
    </location>
</feature>
<feature type="helix" evidence="5">
    <location>
        <begin position="127"/>
        <end position="129"/>
    </location>
</feature>
<feature type="strand" evidence="5">
    <location>
        <begin position="131"/>
        <end position="133"/>
    </location>
</feature>
<feature type="helix" evidence="5">
    <location>
        <begin position="135"/>
        <end position="142"/>
    </location>
</feature>
<feature type="helix" evidence="5">
    <location>
        <begin position="146"/>
        <end position="155"/>
    </location>
</feature>
<feature type="turn" evidence="5">
    <location>
        <begin position="156"/>
        <end position="158"/>
    </location>
</feature>
<feature type="helix" evidence="5">
    <location>
        <begin position="161"/>
        <end position="167"/>
    </location>
</feature>
<feature type="helix" evidence="5">
    <location>
        <begin position="172"/>
        <end position="185"/>
    </location>
</feature>
<feature type="helix" evidence="5">
    <location>
        <begin position="191"/>
        <end position="200"/>
    </location>
</feature>